<gene>
    <name evidence="1" type="primary">queC</name>
    <name type="ordered locus">Syncc9902_2238</name>
</gene>
<evidence type="ECO:0000255" key="1">
    <source>
        <dbReference type="HAMAP-Rule" id="MF_01633"/>
    </source>
</evidence>
<comment type="function">
    <text evidence="1">Catalyzes the ATP-dependent conversion of 7-carboxy-7-deazaguanine (CDG) to 7-cyano-7-deazaguanine (preQ(0)).</text>
</comment>
<comment type="catalytic activity">
    <reaction evidence="1">
        <text>7-carboxy-7-deazaguanine + NH4(+) + ATP = 7-cyano-7-deazaguanine + ADP + phosphate + H2O + H(+)</text>
        <dbReference type="Rhea" id="RHEA:27982"/>
        <dbReference type="ChEBI" id="CHEBI:15377"/>
        <dbReference type="ChEBI" id="CHEBI:15378"/>
        <dbReference type="ChEBI" id="CHEBI:28938"/>
        <dbReference type="ChEBI" id="CHEBI:30616"/>
        <dbReference type="ChEBI" id="CHEBI:43474"/>
        <dbReference type="ChEBI" id="CHEBI:45075"/>
        <dbReference type="ChEBI" id="CHEBI:61036"/>
        <dbReference type="ChEBI" id="CHEBI:456216"/>
        <dbReference type="EC" id="6.3.4.20"/>
    </reaction>
</comment>
<comment type="cofactor">
    <cofactor evidence="1">
        <name>Zn(2+)</name>
        <dbReference type="ChEBI" id="CHEBI:29105"/>
    </cofactor>
    <text evidence="1">Binds 1 zinc ion per subunit.</text>
</comment>
<comment type="pathway">
    <text evidence="1">Purine metabolism; 7-cyano-7-deazaguanine biosynthesis.</text>
</comment>
<comment type="similarity">
    <text evidence="1">Belongs to the QueC family.</text>
</comment>
<protein>
    <recommendedName>
        <fullName evidence="1">7-cyano-7-deazaguanine synthase</fullName>
        <ecNumber evidence="1">6.3.4.20</ecNumber>
    </recommendedName>
    <alternativeName>
        <fullName evidence="1">7-cyano-7-carbaguanine synthase</fullName>
    </alternativeName>
    <alternativeName>
        <fullName evidence="1">PreQ(0) synthase</fullName>
    </alternativeName>
    <alternativeName>
        <fullName evidence="1">Queuosine biosynthesis protein QueC</fullName>
    </alternativeName>
</protein>
<reference key="1">
    <citation type="submission" date="2005-08" db="EMBL/GenBank/DDBJ databases">
        <title>Complete sequence of Synechococcus sp. CC9902.</title>
        <authorList>
            <person name="Copeland A."/>
            <person name="Lucas S."/>
            <person name="Lapidus A."/>
            <person name="Barry K."/>
            <person name="Detter J.C."/>
            <person name="Glavina T."/>
            <person name="Hammon N."/>
            <person name="Israni S."/>
            <person name="Pitluck S."/>
            <person name="Martinez M."/>
            <person name="Schmutz J."/>
            <person name="Larimer F."/>
            <person name="Land M."/>
            <person name="Kyrpides N."/>
            <person name="Ivanova N."/>
            <person name="Richardson P."/>
        </authorList>
    </citation>
    <scope>NUCLEOTIDE SEQUENCE [LARGE SCALE GENOMIC DNA]</scope>
    <source>
        <strain>CC9902</strain>
    </source>
</reference>
<accession>Q3AUG1</accession>
<proteinExistence type="inferred from homology"/>
<name>QUEC_SYNS9</name>
<keyword id="KW-0067">ATP-binding</keyword>
<keyword id="KW-0436">Ligase</keyword>
<keyword id="KW-0479">Metal-binding</keyword>
<keyword id="KW-0547">Nucleotide-binding</keyword>
<keyword id="KW-0671">Queuosine biosynthesis</keyword>
<keyword id="KW-1185">Reference proteome</keyword>
<keyword id="KW-0862">Zinc</keyword>
<dbReference type="EC" id="6.3.4.20" evidence="1"/>
<dbReference type="EMBL" id="CP000097">
    <property type="protein sequence ID" value="ABB27196.1"/>
    <property type="molecule type" value="Genomic_DNA"/>
</dbReference>
<dbReference type="RefSeq" id="WP_011360973.1">
    <property type="nucleotide sequence ID" value="NC_007513.1"/>
</dbReference>
<dbReference type="SMR" id="Q3AUG1"/>
<dbReference type="STRING" id="316279.Syncc9902_2238"/>
<dbReference type="KEGG" id="sye:Syncc9902_2238"/>
<dbReference type="eggNOG" id="COG0603">
    <property type="taxonomic scope" value="Bacteria"/>
</dbReference>
<dbReference type="HOGENOM" id="CLU_081854_1_0_3"/>
<dbReference type="OrthoDB" id="9789567at2"/>
<dbReference type="UniPathway" id="UPA00391"/>
<dbReference type="Proteomes" id="UP000002712">
    <property type="component" value="Chromosome"/>
</dbReference>
<dbReference type="GO" id="GO:0005524">
    <property type="term" value="F:ATP binding"/>
    <property type="evidence" value="ECO:0007669"/>
    <property type="project" value="UniProtKB-UniRule"/>
</dbReference>
<dbReference type="GO" id="GO:0016879">
    <property type="term" value="F:ligase activity, forming carbon-nitrogen bonds"/>
    <property type="evidence" value="ECO:0007669"/>
    <property type="project" value="UniProtKB-UniRule"/>
</dbReference>
<dbReference type="GO" id="GO:0008270">
    <property type="term" value="F:zinc ion binding"/>
    <property type="evidence" value="ECO:0007669"/>
    <property type="project" value="UniProtKB-UniRule"/>
</dbReference>
<dbReference type="GO" id="GO:0008616">
    <property type="term" value="P:queuosine biosynthetic process"/>
    <property type="evidence" value="ECO:0007669"/>
    <property type="project" value="UniProtKB-UniRule"/>
</dbReference>
<dbReference type="CDD" id="cd01995">
    <property type="entry name" value="QueC-like"/>
    <property type="match status" value="1"/>
</dbReference>
<dbReference type="Gene3D" id="3.40.50.620">
    <property type="entry name" value="HUPs"/>
    <property type="match status" value="1"/>
</dbReference>
<dbReference type="HAMAP" id="MF_01633">
    <property type="entry name" value="QueC"/>
    <property type="match status" value="1"/>
</dbReference>
<dbReference type="InterPro" id="IPR018317">
    <property type="entry name" value="QueC"/>
</dbReference>
<dbReference type="InterPro" id="IPR014729">
    <property type="entry name" value="Rossmann-like_a/b/a_fold"/>
</dbReference>
<dbReference type="NCBIfam" id="TIGR00364">
    <property type="entry name" value="7-cyano-7-deazaguanine synthase QueC"/>
    <property type="match status" value="1"/>
</dbReference>
<dbReference type="PANTHER" id="PTHR42914">
    <property type="entry name" value="7-CYANO-7-DEAZAGUANINE SYNTHASE"/>
    <property type="match status" value="1"/>
</dbReference>
<dbReference type="PANTHER" id="PTHR42914:SF1">
    <property type="entry name" value="7-CYANO-7-DEAZAGUANINE SYNTHASE"/>
    <property type="match status" value="1"/>
</dbReference>
<dbReference type="Pfam" id="PF06508">
    <property type="entry name" value="QueC"/>
    <property type="match status" value="1"/>
</dbReference>
<dbReference type="PIRSF" id="PIRSF006293">
    <property type="entry name" value="ExsB"/>
    <property type="match status" value="1"/>
</dbReference>
<dbReference type="SUPFAM" id="SSF52402">
    <property type="entry name" value="Adenine nucleotide alpha hydrolases-like"/>
    <property type="match status" value="1"/>
</dbReference>
<feature type="chain" id="PRO_0000246947" description="7-cyano-7-deazaguanine synthase">
    <location>
        <begin position="1"/>
        <end position="226"/>
    </location>
</feature>
<feature type="binding site" evidence="1">
    <location>
        <begin position="10"/>
        <end position="20"/>
    </location>
    <ligand>
        <name>ATP</name>
        <dbReference type="ChEBI" id="CHEBI:30616"/>
    </ligand>
</feature>
<feature type="binding site" evidence="1">
    <location>
        <position position="191"/>
    </location>
    <ligand>
        <name>Zn(2+)</name>
        <dbReference type="ChEBI" id="CHEBI:29105"/>
    </ligand>
</feature>
<feature type="binding site" evidence="1">
    <location>
        <position position="199"/>
    </location>
    <ligand>
        <name>Zn(2+)</name>
        <dbReference type="ChEBI" id="CHEBI:29105"/>
    </ligand>
</feature>
<feature type="binding site" evidence="1">
    <location>
        <position position="202"/>
    </location>
    <ligand>
        <name>Zn(2+)</name>
        <dbReference type="ChEBI" id="CHEBI:29105"/>
    </ligand>
</feature>
<feature type="binding site" evidence="1">
    <location>
        <position position="205"/>
    </location>
    <ligand>
        <name>Zn(2+)</name>
        <dbReference type="ChEBI" id="CHEBI:29105"/>
    </ligand>
</feature>
<organism>
    <name type="scientific">Synechococcus sp. (strain CC9902)</name>
    <dbReference type="NCBI Taxonomy" id="316279"/>
    <lineage>
        <taxon>Bacteria</taxon>
        <taxon>Bacillati</taxon>
        <taxon>Cyanobacteriota</taxon>
        <taxon>Cyanophyceae</taxon>
        <taxon>Synechococcales</taxon>
        <taxon>Synechococcaceae</taxon>
        <taxon>Synechococcus</taxon>
    </lineage>
</organism>
<sequence>MAQRTAIALLSGGLDSATAAALAQEAGDRVIGLSFDYGQRHRRELKAAAKVAAHLNLAEHHQVDVNLGAWGGSALTDPNQTVPTSGVEEGVIPVTYVPGRNTVFIAIGLSLAEARGAERLVLGVNAVDYSGYPDCRPDYLDAFQTLATLSSKAGREGHGPQLWAPLVQWSKTKIVDEALRLGVPIGETWSCYSGGSRPCGVCDSCRIRDSALREAGRPDLCSNAEG</sequence>